<organism>
    <name type="scientific">Homo sapiens</name>
    <name type="common">Human</name>
    <dbReference type="NCBI Taxonomy" id="9606"/>
    <lineage>
        <taxon>Eukaryota</taxon>
        <taxon>Metazoa</taxon>
        <taxon>Chordata</taxon>
        <taxon>Craniata</taxon>
        <taxon>Vertebrata</taxon>
        <taxon>Euteleostomi</taxon>
        <taxon>Mammalia</taxon>
        <taxon>Eutheria</taxon>
        <taxon>Euarchontoglires</taxon>
        <taxon>Primates</taxon>
        <taxon>Haplorrhini</taxon>
        <taxon>Catarrhini</taxon>
        <taxon>Hominidae</taxon>
        <taxon>Homo</taxon>
    </lineage>
</organism>
<dbReference type="EMBL" id="AK001295">
    <property type="protein sequence ID" value="BAG50888.1"/>
    <property type="molecule type" value="mRNA"/>
</dbReference>
<dbReference type="EMBL" id="AK022340">
    <property type="protein sequence ID" value="BAB14016.1"/>
    <property type="molecule type" value="mRNA"/>
</dbReference>
<dbReference type="EMBL" id="BC002654">
    <property type="protein sequence ID" value="AAH02654.1"/>
    <property type="molecule type" value="mRNA"/>
</dbReference>
<dbReference type="CCDS" id="CCDS11858.1"/>
<dbReference type="RefSeq" id="NP_001290453.1">
    <property type="nucleotide sequence ID" value="NM_001303524.1"/>
</dbReference>
<dbReference type="RefSeq" id="NP_001290454.1">
    <property type="nucleotide sequence ID" value="NM_001303525.1"/>
</dbReference>
<dbReference type="RefSeq" id="NP_001290455.1">
    <property type="nucleotide sequence ID" value="NM_001303526.1"/>
</dbReference>
<dbReference type="RefSeq" id="NP_001290456.1">
    <property type="nucleotide sequence ID" value="NM_001303527.1"/>
</dbReference>
<dbReference type="RefSeq" id="NP_001290457.1">
    <property type="nucleotide sequence ID" value="NM_001303528.1"/>
</dbReference>
<dbReference type="RefSeq" id="NP_001290458.1">
    <property type="nucleotide sequence ID" value="NM_001303529.1"/>
</dbReference>
<dbReference type="RefSeq" id="NP_001290459.1">
    <property type="nucleotide sequence ID" value="NM_001303530.1"/>
</dbReference>
<dbReference type="RefSeq" id="NP_115914.1">
    <property type="nucleotide sequence ID" value="NM_032525.3"/>
</dbReference>
<dbReference type="SMR" id="Q9BUF5"/>
<dbReference type="BioGRID" id="124148">
    <property type="interactions" value="261"/>
</dbReference>
<dbReference type="CORUM" id="Q9BUF5"/>
<dbReference type="FunCoup" id="Q9BUF5">
    <property type="interactions" value="1215"/>
</dbReference>
<dbReference type="IntAct" id="Q9BUF5">
    <property type="interactions" value="120"/>
</dbReference>
<dbReference type="MINT" id="Q9BUF5"/>
<dbReference type="STRING" id="9606.ENSP00000318697"/>
<dbReference type="ChEMBL" id="CHEMBL2095182"/>
<dbReference type="DrugBank" id="DB11638">
    <property type="generic name" value="Artenimol"/>
</dbReference>
<dbReference type="DrugBank" id="DB05147">
    <property type="generic name" value="CYT997"/>
</dbReference>
<dbReference type="DrugCentral" id="Q9BUF5"/>
<dbReference type="GlyGen" id="Q9BUF5">
    <property type="glycosylation" value="2 sites, 1 N-linked glycan (1 site), 1 O-linked glycan (1 site)"/>
</dbReference>
<dbReference type="iPTMnet" id="Q9BUF5"/>
<dbReference type="MetOSite" id="Q9BUF5"/>
<dbReference type="PhosphoSitePlus" id="Q9BUF5"/>
<dbReference type="SwissPalm" id="Q9BUF5"/>
<dbReference type="BioMuta" id="TUBB6"/>
<dbReference type="DMDM" id="68776070"/>
<dbReference type="jPOST" id="Q9BUF5"/>
<dbReference type="MassIVE" id="Q9BUF5"/>
<dbReference type="PaxDb" id="9606-ENSP00000318697"/>
<dbReference type="PeptideAtlas" id="Q9BUF5"/>
<dbReference type="PRIDE" id="Q9BUF5"/>
<dbReference type="ProteomicsDB" id="79081"/>
<dbReference type="Pumba" id="Q9BUF5"/>
<dbReference type="Antibodypedia" id="58515">
    <property type="antibodies" value="205 antibodies from 22 providers"/>
</dbReference>
<dbReference type="DNASU" id="84617"/>
<dbReference type="Ensembl" id="ENST00000317702.10">
    <property type="protein sequence ID" value="ENSP00000318697.4"/>
    <property type="gene ID" value="ENSG00000176014.13"/>
</dbReference>
<dbReference type="GeneID" id="84617"/>
<dbReference type="KEGG" id="hsa:84617"/>
<dbReference type="MANE-Select" id="ENST00000317702.10">
    <property type="protein sequence ID" value="ENSP00000318697.4"/>
    <property type="RefSeq nucleotide sequence ID" value="NM_032525.3"/>
    <property type="RefSeq protein sequence ID" value="NP_115914.1"/>
</dbReference>
<dbReference type="UCSC" id="uc002kqw.4">
    <property type="organism name" value="human"/>
</dbReference>
<dbReference type="AGR" id="HGNC:20776"/>
<dbReference type="CTD" id="84617"/>
<dbReference type="DisGeNET" id="84617"/>
<dbReference type="GeneCards" id="TUBB6"/>
<dbReference type="HGNC" id="HGNC:20776">
    <property type="gene designation" value="TUBB6"/>
</dbReference>
<dbReference type="HPA" id="ENSG00000176014">
    <property type="expression patterns" value="Low tissue specificity"/>
</dbReference>
<dbReference type="MalaCards" id="TUBB6"/>
<dbReference type="MIM" id="615103">
    <property type="type" value="gene"/>
</dbReference>
<dbReference type="MIM" id="617732">
    <property type="type" value="phenotype"/>
</dbReference>
<dbReference type="neXtProt" id="NX_Q9BUF5"/>
<dbReference type="OpenTargets" id="ENSG00000176014"/>
<dbReference type="PharmGKB" id="PA128394736"/>
<dbReference type="VEuPathDB" id="HostDB:ENSG00000176014"/>
<dbReference type="eggNOG" id="KOG1375">
    <property type="taxonomic scope" value="Eukaryota"/>
</dbReference>
<dbReference type="GeneTree" id="ENSGT00940000159977"/>
<dbReference type="InParanoid" id="Q9BUF5"/>
<dbReference type="OMA" id="FLTCCAI"/>
<dbReference type="OrthoDB" id="1662883at2759"/>
<dbReference type="PAN-GO" id="Q9BUF5">
    <property type="GO annotations" value="6 GO annotations based on evolutionary models"/>
</dbReference>
<dbReference type="PhylomeDB" id="Q9BUF5"/>
<dbReference type="TreeFam" id="TF300298"/>
<dbReference type="PathwayCommons" id="Q9BUF5"/>
<dbReference type="Reactome" id="R-HSA-1445148">
    <property type="pathway name" value="Translocation of SLC2A4 (GLUT4) to the plasma membrane"/>
</dbReference>
<dbReference type="Reactome" id="R-HSA-190840">
    <property type="pathway name" value="Microtubule-dependent trafficking of connexons from Golgi to the plasma membrane"/>
</dbReference>
<dbReference type="Reactome" id="R-HSA-190861">
    <property type="pathway name" value="Gap junction assembly"/>
</dbReference>
<dbReference type="Reactome" id="R-HSA-2132295">
    <property type="pathway name" value="MHC class II antigen presentation"/>
</dbReference>
<dbReference type="Reactome" id="R-HSA-2467813">
    <property type="pathway name" value="Separation of Sister Chromatids"/>
</dbReference>
<dbReference type="Reactome" id="R-HSA-2500257">
    <property type="pathway name" value="Resolution of Sister Chromatid Cohesion"/>
</dbReference>
<dbReference type="Reactome" id="R-HSA-3371497">
    <property type="pathway name" value="HSP90 chaperone cycle for steroid hormone receptors (SHR) in the presence of ligand"/>
</dbReference>
<dbReference type="Reactome" id="R-HSA-380320">
    <property type="pathway name" value="Recruitment of NuMA to mitotic centrosomes"/>
</dbReference>
<dbReference type="Reactome" id="R-HSA-389957">
    <property type="pathway name" value="Prefoldin mediated transfer of substrate to CCT/TriC"/>
</dbReference>
<dbReference type="Reactome" id="R-HSA-389960">
    <property type="pathway name" value="Formation of tubulin folding intermediates by CCT/TriC"/>
</dbReference>
<dbReference type="Reactome" id="R-HSA-389977">
    <property type="pathway name" value="Post-chaperonin tubulin folding pathway"/>
</dbReference>
<dbReference type="Reactome" id="R-HSA-437239">
    <property type="pathway name" value="Recycling pathway of L1"/>
</dbReference>
<dbReference type="Reactome" id="R-HSA-5610787">
    <property type="pathway name" value="Hedgehog 'off' state"/>
</dbReference>
<dbReference type="Reactome" id="R-HSA-5617833">
    <property type="pathway name" value="Cilium Assembly"/>
</dbReference>
<dbReference type="Reactome" id="R-HSA-5620924">
    <property type="pathway name" value="Intraflagellar transport"/>
</dbReference>
<dbReference type="Reactome" id="R-HSA-5626467">
    <property type="pathway name" value="RHO GTPases activate IQGAPs"/>
</dbReference>
<dbReference type="Reactome" id="R-HSA-5663220">
    <property type="pathway name" value="RHO GTPases Activate Formins"/>
</dbReference>
<dbReference type="Reactome" id="R-HSA-6807878">
    <property type="pathway name" value="COPI-mediated anterograde transport"/>
</dbReference>
<dbReference type="Reactome" id="R-HSA-6811434">
    <property type="pathway name" value="COPI-dependent Golgi-to-ER retrograde traffic"/>
</dbReference>
<dbReference type="Reactome" id="R-HSA-6811436">
    <property type="pathway name" value="COPI-independent Golgi-to-ER retrograde traffic"/>
</dbReference>
<dbReference type="Reactome" id="R-HSA-68877">
    <property type="pathway name" value="Mitotic Prometaphase"/>
</dbReference>
<dbReference type="Reactome" id="R-HSA-8852276">
    <property type="pathway name" value="The role of GTSE1 in G2/M progression after G2 checkpoint"/>
</dbReference>
<dbReference type="Reactome" id="R-HSA-8955332">
    <property type="pathway name" value="Carboxyterminal post-translational modifications of tubulin"/>
</dbReference>
<dbReference type="Reactome" id="R-HSA-9609690">
    <property type="pathway name" value="HCMV Early Events"/>
</dbReference>
<dbReference type="Reactome" id="R-HSA-9609736">
    <property type="pathway name" value="Assembly and cell surface presentation of NMDA receptors"/>
</dbReference>
<dbReference type="Reactome" id="R-HSA-9619483">
    <property type="pathway name" value="Activation of AMPK downstream of NMDARs"/>
</dbReference>
<dbReference type="Reactome" id="R-HSA-9646399">
    <property type="pathway name" value="Aggrephagy"/>
</dbReference>
<dbReference type="Reactome" id="R-HSA-9648025">
    <property type="pathway name" value="EML4 and NUDC in mitotic spindle formation"/>
</dbReference>
<dbReference type="Reactome" id="R-HSA-9668328">
    <property type="pathway name" value="Sealing of the nuclear envelope (NE) by ESCRT-III"/>
</dbReference>
<dbReference type="Reactome" id="R-HSA-983189">
    <property type="pathway name" value="Kinesins"/>
</dbReference>
<dbReference type="Reactome" id="R-HSA-9833482">
    <property type="pathway name" value="PKR-mediated signaling"/>
</dbReference>
<dbReference type="SignaLink" id="Q9BUF5"/>
<dbReference type="SIGNOR" id="Q9BUF5"/>
<dbReference type="BioGRID-ORCS" id="84617">
    <property type="hits" value="12 hits in 1153 CRISPR screens"/>
</dbReference>
<dbReference type="CD-CODE" id="91857CE7">
    <property type="entry name" value="Nucleolus"/>
</dbReference>
<dbReference type="ChiTaRS" id="TUBB6">
    <property type="organism name" value="human"/>
</dbReference>
<dbReference type="GenomeRNAi" id="84617"/>
<dbReference type="Pharos" id="Q9BUF5">
    <property type="development level" value="Tclin"/>
</dbReference>
<dbReference type="PRO" id="PR:Q9BUF5"/>
<dbReference type="Proteomes" id="UP000005640">
    <property type="component" value="Chromosome 18"/>
</dbReference>
<dbReference type="RNAct" id="Q9BUF5">
    <property type="molecule type" value="protein"/>
</dbReference>
<dbReference type="Bgee" id="ENSG00000176014">
    <property type="expression patterns" value="Expressed in lower esophagus muscularis layer and 203 other cell types or tissues"/>
</dbReference>
<dbReference type="ExpressionAtlas" id="Q9BUF5">
    <property type="expression patterns" value="baseline and differential"/>
</dbReference>
<dbReference type="GO" id="GO:0005737">
    <property type="term" value="C:cytoplasm"/>
    <property type="evidence" value="ECO:0000318"/>
    <property type="project" value="GO_Central"/>
</dbReference>
<dbReference type="GO" id="GO:0070062">
    <property type="term" value="C:extracellular exosome"/>
    <property type="evidence" value="ECO:0007005"/>
    <property type="project" value="UniProtKB"/>
</dbReference>
<dbReference type="GO" id="GO:0045171">
    <property type="term" value="C:intercellular bridge"/>
    <property type="evidence" value="ECO:0000314"/>
    <property type="project" value="HPA"/>
</dbReference>
<dbReference type="GO" id="GO:0005874">
    <property type="term" value="C:microtubule"/>
    <property type="evidence" value="ECO:0000314"/>
    <property type="project" value="UniProtKB"/>
</dbReference>
<dbReference type="GO" id="GO:0015630">
    <property type="term" value="C:microtubule cytoskeleton"/>
    <property type="evidence" value="ECO:0000314"/>
    <property type="project" value="HPA"/>
</dbReference>
<dbReference type="GO" id="GO:0072686">
    <property type="term" value="C:mitotic spindle"/>
    <property type="evidence" value="ECO:0000314"/>
    <property type="project" value="HPA"/>
</dbReference>
<dbReference type="GO" id="GO:0005634">
    <property type="term" value="C:nucleus"/>
    <property type="evidence" value="ECO:0007005"/>
    <property type="project" value="UniProtKB"/>
</dbReference>
<dbReference type="GO" id="GO:0005525">
    <property type="term" value="F:GTP binding"/>
    <property type="evidence" value="ECO:0000318"/>
    <property type="project" value="GO_Central"/>
</dbReference>
<dbReference type="GO" id="GO:0003924">
    <property type="term" value="F:GTPase activity"/>
    <property type="evidence" value="ECO:0007669"/>
    <property type="project" value="InterPro"/>
</dbReference>
<dbReference type="GO" id="GO:0046872">
    <property type="term" value="F:metal ion binding"/>
    <property type="evidence" value="ECO:0007669"/>
    <property type="project" value="UniProtKB-KW"/>
</dbReference>
<dbReference type="GO" id="GO:0005200">
    <property type="term" value="F:structural constituent of cytoskeleton"/>
    <property type="evidence" value="ECO:0000318"/>
    <property type="project" value="GO_Central"/>
</dbReference>
<dbReference type="GO" id="GO:0000226">
    <property type="term" value="P:microtubule cytoskeleton organization"/>
    <property type="evidence" value="ECO:0000318"/>
    <property type="project" value="GO_Central"/>
</dbReference>
<dbReference type="GO" id="GO:0000278">
    <property type="term" value="P:mitotic cell cycle"/>
    <property type="evidence" value="ECO:0000318"/>
    <property type="project" value="GO_Central"/>
</dbReference>
<dbReference type="CDD" id="cd02187">
    <property type="entry name" value="beta_tubulin"/>
    <property type="match status" value="1"/>
</dbReference>
<dbReference type="FunFam" id="1.10.287.600:FF:000002">
    <property type="entry name" value="Tubulin beta chain"/>
    <property type="match status" value="1"/>
</dbReference>
<dbReference type="FunFam" id="3.30.1330.20:FF:000002">
    <property type="entry name" value="Tubulin beta chain"/>
    <property type="match status" value="1"/>
</dbReference>
<dbReference type="FunFam" id="3.40.50.1440:FF:000003">
    <property type="entry name" value="Tubulin beta chain"/>
    <property type="match status" value="1"/>
</dbReference>
<dbReference type="Gene3D" id="1.10.287.600">
    <property type="entry name" value="Helix hairpin bin"/>
    <property type="match status" value="1"/>
</dbReference>
<dbReference type="Gene3D" id="3.30.1330.20">
    <property type="entry name" value="Tubulin/FtsZ, C-terminal domain"/>
    <property type="match status" value="1"/>
</dbReference>
<dbReference type="Gene3D" id="3.40.50.1440">
    <property type="entry name" value="Tubulin/FtsZ, GTPase domain"/>
    <property type="match status" value="1"/>
</dbReference>
<dbReference type="InterPro" id="IPR013838">
    <property type="entry name" value="Beta-tubulin_BS"/>
</dbReference>
<dbReference type="InterPro" id="IPR002453">
    <property type="entry name" value="Beta_tubulin"/>
</dbReference>
<dbReference type="InterPro" id="IPR008280">
    <property type="entry name" value="Tub_FtsZ_C"/>
</dbReference>
<dbReference type="InterPro" id="IPR000217">
    <property type="entry name" value="Tubulin"/>
</dbReference>
<dbReference type="InterPro" id="IPR037103">
    <property type="entry name" value="Tubulin/FtsZ-like_C"/>
</dbReference>
<dbReference type="InterPro" id="IPR018316">
    <property type="entry name" value="Tubulin/FtsZ_2-layer-sand-dom"/>
</dbReference>
<dbReference type="InterPro" id="IPR036525">
    <property type="entry name" value="Tubulin/FtsZ_GTPase_sf"/>
</dbReference>
<dbReference type="InterPro" id="IPR023123">
    <property type="entry name" value="Tubulin_C"/>
</dbReference>
<dbReference type="InterPro" id="IPR017975">
    <property type="entry name" value="Tubulin_CS"/>
</dbReference>
<dbReference type="InterPro" id="IPR003008">
    <property type="entry name" value="Tubulin_FtsZ_GTPase"/>
</dbReference>
<dbReference type="PANTHER" id="PTHR11588">
    <property type="entry name" value="TUBULIN"/>
    <property type="match status" value="1"/>
</dbReference>
<dbReference type="Pfam" id="PF00091">
    <property type="entry name" value="Tubulin"/>
    <property type="match status" value="1"/>
</dbReference>
<dbReference type="Pfam" id="PF03953">
    <property type="entry name" value="Tubulin_C"/>
    <property type="match status" value="1"/>
</dbReference>
<dbReference type="PRINTS" id="PR01163">
    <property type="entry name" value="BETATUBULIN"/>
</dbReference>
<dbReference type="PRINTS" id="PR01161">
    <property type="entry name" value="TUBULIN"/>
</dbReference>
<dbReference type="SMART" id="SM00864">
    <property type="entry name" value="Tubulin"/>
    <property type="match status" value="1"/>
</dbReference>
<dbReference type="SMART" id="SM00865">
    <property type="entry name" value="Tubulin_C"/>
    <property type="match status" value="1"/>
</dbReference>
<dbReference type="SUPFAM" id="SSF55307">
    <property type="entry name" value="Tubulin C-terminal domain-like"/>
    <property type="match status" value="1"/>
</dbReference>
<dbReference type="SUPFAM" id="SSF52490">
    <property type="entry name" value="Tubulin nucleotide-binding domain-like"/>
    <property type="match status" value="1"/>
</dbReference>
<dbReference type="PROSITE" id="PS00227">
    <property type="entry name" value="TUBULIN"/>
    <property type="match status" value="1"/>
</dbReference>
<dbReference type="PROSITE" id="PS00228">
    <property type="entry name" value="TUBULIN_B_AUTOREG"/>
    <property type="match status" value="1"/>
</dbReference>
<accession>Q9BUF5</accession>
<accession>B3KM76</accession>
<accession>Q9HA42</accession>
<protein>
    <recommendedName>
        <fullName>Tubulin beta-6 chain</fullName>
    </recommendedName>
    <alternativeName>
        <fullName>Tubulin beta class V</fullName>
    </alternativeName>
</protein>
<name>TBB6_HUMAN</name>
<comment type="function">
    <text evidence="2">Tubulin is the major constituent of microtubules, a cylinder consisting of laterally associated linear protofilaments composed of alpha- and beta-tubulin heterodimers. Microtubules grow by the addition of GTP-tubulin dimers to the microtubule end, where a stabilizing cap forms. Below the cap, tubulin dimers are in GDP-bound state, owing to GTPase activity of alpha-tubulin.</text>
</comment>
<comment type="cofactor">
    <cofactor evidence="4">
        <name>Mg(2+)</name>
        <dbReference type="ChEBI" id="CHEBI:18420"/>
    </cofactor>
</comment>
<comment type="subunit">
    <text>Dimer of alpha and beta chains. A typical microtubule is a hollow water-filled tube with an outer diameter of 25 nm and an inner diameter of 15 nM. Alpha-beta heterodimers associate head-to-tail to form protofilaments running lengthwise along the microtubule wall with the beta-tubulin subunit facing the microtubule plus end conferring a structural polarity. Microtubules usually have 13 protofilaments but different protofilament numbers can be found in some organisms and specialized cells.</text>
</comment>
<comment type="interaction">
    <interactant intactId="EBI-356735">
        <id>Q9BUF5</id>
    </interactant>
    <interactant intactId="EBI-352682">
        <id>P04792</id>
        <label>HSPB1</label>
    </interactant>
    <organismsDiffer>false</organismsDiffer>
    <experiments>3</experiments>
</comment>
<comment type="interaction">
    <interactant intactId="EBI-356735">
        <id>Q9BUF5</id>
    </interactant>
    <interactant intactId="EBI-466029">
        <id>P42858</id>
        <label>HTT</label>
    </interactant>
    <organismsDiffer>false</organismsDiffer>
    <experiments>3</experiments>
</comment>
<comment type="interaction">
    <interactant intactId="EBI-356735">
        <id>Q9BUF5</id>
    </interactant>
    <interactant intactId="EBI-10975473">
        <id>O60333-2</id>
        <label>KIF1B</label>
    </interactant>
    <organismsDiffer>false</organismsDiffer>
    <experiments>3</experiments>
</comment>
<comment type="interaction">
    <interactant intactId="EBI-356735">
        <id>Q9BUF5</id>
    </interactant>
    <interactant intactId="EBI-5323863">
        <id>Q5S007</id>
        <label>LRRK2</label>
    </interactant>
    <organismsDiffer>false</organismsDiffer>
    <experiments>3</experiments>
</comment>
<comment type="interaction">
    <interactant intactId="EBI-356735">
        <id>Q9BUF5</id>
    </interactant>
    <interactant intactId="EBI-720609">
        <id>O76024</id>
        <label>WFS1</label>
    </interactant>
    <organismsDiffer>false</organismsDiffer>
    <experiments>3</experiments>
</comment>
<comment type="subcellular location">
    <subcellularLocation>
        <location evidence="1">Cytoplasm</location>
        <location evidence="1">Cytoskeleton</location>
    </subcellularLocation>
</comment>
<comment type="tissue specificity">
    <text evidence="9">Ubiquitous. Maximal expression in breast and lung, where it represents around 10% of all beta-tubulins. Largely decreased expression in most cancerous tissues.</text>
</comment>
<comment type="domain">
    <text>The highly acidic C-terminal region may bind cations such as calcium.</text>
</comment>
<comment type="domain">
    <text evidence="3">The MREI motif is common among all beta-tubulin isoforms and may be critical for tubulin autoregulation.</text>
</comment>
<comment type="PTM">
    <text evidence="5 10">Some glutamate residues at the C-terminus are polyglutamylated, resulting in polyglutamate chains on the gamma-carboxyl group (PubMed:26875866). Polyglutamylation plays a key role in microtubule severing by spastin (SPAST). SPAST preferentially recognizes and acts on microtubules decorated with short polyglutamate tails: severing activity by SPAST increases as the number of glutamates per tubulin rises from one to eight, but decreases beyond this glutamylation threshold (PubMed:26875866). Glutamylation is also involved in cilia motility (By similarity).</text>
</comment>
<comment type="PTM">
    <text evidence="3 13">Some glutamate residues at the C-terminus are monoglycylated but not polyglycylated due to the absence of functional TTLL10 in human. Monoglycylation is mainly limited to tubulin incorporated into cilia and flagella axonemes, which is required for their stability and maintenance. Flagella glycylation controls sperm motility. Both polyglutamylation and monoglycylation can coexist on the same protein on adjacent residues, and lowering glycylation levels increases polyglutamylation, and reciprocally.</text>
</comment>
<comment type="PTM">
    <text evidence="8">Phosphorylated on Ser-172 by CDK1 during the cell cycle, from metaphase to telophase, but not in interphase. This phosphorylation inhibits tubulin incorporation into microtubules.</text>
</comment>
<comment type="disease" evidence="11">
    <disease id="DI-05120">
        <name>Facial palsy, congenital, with ptosis and velopharyngeal dysfunction</name>
        <acronym>FPVEPD</acronym>
        <description>An autosomal dominant congenital disorder characterized by non-progressive bilateral facial palsy, velopharyngeal dysfunction presenting with varying degrees of hypomimia, rhinophonia and impaired gag reflex, and bilateral ptosis.</description>
        <dbReference type="MIM" id="617732"/>
    </disease>
    <text>The disease is caused by variants affecting the gene represented in this entry.</text>
</comment>
<comment type="similarity">
    <text evidence="12">Belongs to the tubulin family.</text>
</comment>
<keyword id="KW-0963">Cytoplasm</keyword>
<keyword id="KW-0206">Cytoskeleton</keyword>
<keyword id="KW-0225">Disease variant</keyword>
<keyword id="KW-0342">GTP-binding</keyword>
<keyword id="KW-1017">Isopeptide bond</keyword>
<keyword id="KW-0460">Magnesium</keyword>
<keyword id="KW-0479">Metal-binding</keyword>
<keyword id="KW-0493">Microtubule</keyword>
<keyword id="KW-0547">Nucleotide-binding</keyword>
<keyword id="KW-0597">Phosphoprotein</keyword>
<keyword id="KW-1267">Proteomics identification</keyword>
<keyword id="KW-1185">Reference proteome</keyword>
<evidence type="ECO:0000250" key="1"/>
<evidence type="ECO:0000250" key="2">
    <source>
        <dbReference type="UniProtKB" id="P02557"/>
    </source>
</evidence>
<evidence type="ECO:0000250" key="3">
    <source>
        <dbReference type="UniProtKB" id="P07437"/>
    </source>
</evidence>
<evidence type="ECO:0000250" key="4">
    <source>
        <dbReference type="UniProtKB" id="P68363"/>
    </source>
</evidence>
<evidence type="ECO:0000250" key="5">
    <source>
        <dbReference type="UniProtKB" id="P99024"/>
    </source>
</evidence>
<evidence type="ECO:0000250" key="6">
    <source>
        <dbReference type="UniProtKB" id="Q13509"/>
    </source>
</evidence>
<evidence type="ECO:0000250" key="7">
    <source>
        <dbReference type="UniProtKB" id="Q2T9S0"/>
    </source>
</evidence>
<evidence type="ECO:0000269" key="8">
    <source>
    </source>
</evidence>
<evidence type="ECO:0000269" key="9">
    <source>
    </source>
</evidence>
<evidence type="ECO:0000269" key="10">
    <source>
    </source>
</evidence>
<evidence type="ECO:0000269" key="11">
    <source>
    </source>
</evidence>
<evidence type="ECO:0000305" key="12"/>
<evidence type="ECO:0000305" key="13">
    <source>
    </source>
</evidence>
<feature type="chain" id="PRO_0000048255" description="Tubulin beta-6 chain">
    <location>
        <begin position="1"/>
        <end position="446"/>
    </location>
</feature>
<feature type="short sequence motif" description="MREI motif" evidence="3">
    <location>
        <begin position="1"/>
        <end position="4"/>
    </location>
</feature>
<feature type="binding site" evidence="6">
    <location>
        <position position="11"/>
    </location>
    <ligand>
        <name>GTP</name>
        <dbReference type="ChEBI" id="CHEBI:37565"/>
    </ligand>
</feature>
<feature type="binding site" evidence="4">
    <location>
        <position position="69"/>
    </location>
    <ligand>
        <name>GTP</name>
        <dbReference type="ChEBI" id="CHEBI:37565"/>
    </ligand>
</feature>
<feature type="binding site" evidence="4">
    <location>
        <position position="69"/>
    </location>
    <ligand>
        <name>Mg(2+)</name>
        <dbReference type="ChEBI" id="CHEBI:18420"/>
    </ligand>
</feature>
<feature type="binding site" evidence="6">
    <location>
        <position position="138"/>
    </location>
    <ligand>
        <name>GTP</name>
        <dbReference type="ChEBI" id="CHEBI:37565"/>
    </ligand>
</feature>
<feature type="binding site" evidence="6">
    <location>
        <position position="142"/>
    </location>
    <ligand>
        <name>GTP</name>
        <dbReference type="ChEBI" id="CHEBI:37565"/>
    </ligand>
</feature>
<feature type="binding site" evidence="6">
    <location>
        <position position="143"/>
    </location>
    <ligand>
        <name>GTP</name>
        <dbReference type="ChEBI" id="CHEBI:37565"/>
    </ligand>
</feature>
<feature type="binding site" evidence="6">
    <location>
        <position position="144"/>
    </location>
    <ligand>
        <name>GTP</name>
        <dbReference type="ChEBI" id="CHEBI:37565"/>
    </ligand>
</feature>
<feature type="binding site" evidence="6">
    <location>
        <position position="204"/>
    </location>
    <ligand>
        <name>GTP</name>
        <dbReference type="ChEBI" id="CHEBI:37565"/>
    </ligand>
</feature>
<feature type="binding site" evidence="6">
    <location>
        <position position="226"/>
    </location>
    <ligand>
        <name>GTP</name>
        <dbReference type="ChEBI" id="CHEBI:37565"/>
    </ligand>
</feature>
<feature type="modified residue" description="Phosphoserine; by CDK1" evidence="8">
    <location>
        <position position="172"/>
    </location>
</feature>
<feature type="modified residue" description="5-glutamyl polyglutamate" evidence="7">
    <location>
        <position position="438"/>
    </location>
</feature>
<feature type="sequence variant" id="VAR_080406" description="In FPVEPD; may affect microtubules stability; dbSNP:rs1555669248." evidence="11">
    <original>F</original>
    <variation>S</variation>
    <location>
        <position position="394"/>
    </location>
</feature>
<feature type="sequence conflict" description="In Ref. 1; BAB14016." evidence="12" ref="1">
    <original>I</original>
    <variation>V</variation>
    <location>
        <position position="91"/>
    </location>
</feature>
<reference key="1">
    <citation type="journal article" date="2004" name="Nat. Genet.">
        <title>Complete sequencing and characterization of 21,243 full-length human cDNAs.</title>
        <authorList>
            <person name="Ota T."/>
            <person name="Suzuki Y."/>
            <person name="Nishikawa T."/>
            <person name="Otsuki T."/>
            <person name="Sugiyama T."/>
            <person name="Irie R."/>
            <person name="Wakamatsu A."/>
            <person name="Hayashi K."/>
            <person name="Sato H."/>
            <person name="Nagai K."/>
            <person name="Kimura K."/>
            <person name="Makita H."/>
            <person name="Sekine M."/>
            <person name="Obayashi M."/>
            <person name="Nishi T."/>
            <person name="Shibahara T."/>
            <person name="Tanaka T."/>
            <person name="Ishii S."/>
            <person name="Yamamoto J."/>
            <person name="Saito K."/>
            <person name="Kawai Y."/>
            <person name="Isono Y."/>
            <person name="Nakamura Y."/>
            <person name="Nagahari K."/>
            <person name="Murakami K."/>
            <person name="Yasuda T."/>
            <person name="Iwayanagi T."/>
            <person name="Wagatsuma M."/>
            <person name="Shiratori A."/>
            <person name="Sudo H."/>
            <person name="Hosoiri T."/>
            <person name="Kaku Y."/>
            <person name="Kodaira H."/>
            <person name="Kondo H."/>
            <person name="Sugawara M."/>
            <person name="Takahashi M."/>
            <person name="Kanda K."/>
            <person name="Yokoi T."/>
            <person name="Furuya T."/>
            <person name="Kikkawa E."/>
            <person name="Omura Y."/>
            <person name="Abe K."/>
            <person name="Kamihara K."/>
            <person name="Katsuta N."/>
            <person name="Sato K."/>
            <person name="Tanikawa M."/>
            <person name="Yamazaki M."/>
            <person name="Ninomiya K."/>
            <person name="Ishibashi T."/>
            <person name="Yamashita H."/>
            <person name="Murakawa K."/>
            <person name="Fujimori K."/>
            <person name="Tanai H."/>
            <person name="Kimata M."/>
            <person name="Watanabe M."/>
            <person name="Hiraoka S."/>
            <person name="Chiba Y."/>
            <person name="Ishida S."/>
            <person name="Ono Y."/>
            <person name="Takiguchi S."/>
            <person name="Watanabe S."/>
            <person name="Yosida M."/>
            <person name="Hotuta T."/>
            <person name="Kusano J."/>
            <person name="Kanehori K."/>
            <person name="Takahashi-Fujii A."/>
            <person name="Hara H."/>
            <person name="Tanase T.-O."/>
            <person name="Nomura Y."/>
            <person name="Togiya S."/>
            <person name="Komai F."/>
            <person name="Hara R."/>
            <person name="Takeuchi K."/>
            <person name="Arita M."/>
            <person name="Imose N."/>
            <person name="Musashino K."/>
            <person name="Yuuki H."/>
            <person name="Oshima A."/>
            <person name="Sasaki N."/>
            <person name="Aotsuka S."/>
            <person name="Yoshikawa Y."/>
            <person name="Matsunawa H."/>
            <person name="Ichihara T."/>
            <person name="Shiohata N."/>
            <person name="Sano S."/>
            <person name="Moriya S."/>
            <person name="Momiyama H."/>
            <person name="Satoh N."/>
            <person name="Takami S."/>
            <person name="Terashima Y."/>
            <person name="Suzuki O."/>
            <person name="Nakagawa S."/>
            <person name="Senoh A."/>
            <person name="Mizoguchi H."/>
            <person name="Goto Y."/>
            <person name="Shimizu F."/>
            <person name="Wakebe H."/>
            <person name="Hishigaki H."/>
            <person name="Watanabe T."/>
            <person name="Sugiyama A."/>
            <person name="Takemoto M."/>
            <person name="Kawakami B."/>
            <person name="Yamazaki M."/>
            <person name="Watanabe K."/>
            <person name="Kumagai A."/>
            <person name="Itakura S."/>
            <person name="Fukuzumi Y."/>
            <person name="Fujimori Y."/>
            <person name="Komiyama M."/>
            <person name="Tashiro H."/>
            <person name="Tanigami A."/>
            <person name="Fujiwara T."/>
            <person name="Ono T."/>
            <person name="Yamada K."/>
            <person name="Fujii Y."/>
            <person name="Ozaki K."/>
            <person name="Hirao M."/>
            <person name="Ohmori Y."/>
            <person name="Kawabata A."/>
            <person name="Hikiji T."/>
            <person name="Kobatake N."/>
            <person name="Inagaki H."/>
            <person name="Ikema Y."/>
            <person name="Okamoto S."/>
            <person name="Okitani R."/>
            <person name="Kawakami T."/>
            <person name="Noguchi S."/>
            <person name="Itoh T."/>
            <person name="Shigeta K."/>
            <person name="Senba T."/>
            <person name="Matsumura K."/>
            <person name="Nakajima Y."/>
            <person name="Mizuno T."/>
            <person name="Morinaga M."/>
            <person name="Sasaki M."/>
            <person name="Togashi T."/>
            <person name="Oyama M."/>
            <person name="Hata H."/>
            <person name="Watanabe M."/>
            <person name="Komatsu T."/>
            <person name="Mizushima-Sugano J."/>
            <person name="Satoh T."/>
            <person name="Shirai Y."/>
            <person name="Takahashi Y."/>
            <person name="Nakagawa K."/>
            <person name="Okumura K."/>
            <person name="Nagase T."/>
            <person name="Nomura N."/>
            <person name="Kikuchi H."/>
            <person name="Masuho Y."/>
            <person name="Yamashita R."/>
            <person name="Nakai K."/>
            <person name="Yada T."/>
            <person name="Nakamura Y."/>
            <person name="Ohara O."/>
            <person name="Isogai T."/>
            <person name="Sugano S."/>
        </authorList>
    </citation>
    <scope>NUCLEOTIDE SEQUENCE [LARGE SCALE MRNA]</scope>
    <source>
        <tissue>Mammary gland</tissue>
    </source>
</reference>
<reference key="2">
    <citation type="journal article" date="2004" name="Genome Res.">
        <title>The status, quality, and expansion of the NIH full-length cDNA project: the Mammalian Gene Collection (MGC).</title>
        <authorList>
            <consortium name="The MGC Project Team"/>
        </authorList>
    </citation>
    <scope>NUCLEOTIDE SEQUENCE [LARGE SCALE MRNA]</scope>
    <source>
        <tissue>Uterus</tissue>
    </source>
</reference>
<reference key="3">
    <citation type="journal article" date="2006" name="Mol. Biol. Cell">
        <title>Microtubule regulation in mitosis: tubulin phosphorylation by the cyclin-dependent kinase Cdk1.</title>
        <authorList>
            <person name="Fourest-Lieuvin A."/>
            <person name="Peris L."/>
            <person name="Gache V."/>
            <person name="Garcia-Saez I."/>
            <person name="Juillan-Binard C."/>
            <person name="Lantez V."/>
            <person name="Job D."/>
        </authorList>
    </citation>
    <scope>PHOSPHORYLATION AT SER-172</scope>
</reference>
<reference key="4">
    <citation type="journal article" date="2009" name="Cell">
        <title>Evolutionary divergence of enzymatic mechanisms for posttranslational polyglycylation.</title>
        <authorList>
            <person name="Rogowski K."/>
            <person name="Juge F."/>
            <person name="van Dijk J."/>
            <person name="Wloga D."/>
            <person name="Strub J.-M."/>
            <person name="Levilliers N."/>
            <person name="Thomas D."/>
            <person name="Bre M.-H."/>
            <person name="Van Dorsselaer A."/>
            <person name="Gaertig J."/>
            <person name="Janke C."/>
        </authorList>
    </citation>
    <scope>GLYCYLATION</scope>
</reference>
<reference key="5">
    <citation type="journal article" date="2009" name="Sci. Signal.">
        <title>Quantitative phosphoproteomic analysis of T cell receptor signaling reveals system-wide modulation of protein-protein interactions.</title>
        <authorList>
            <person name="Mayya V."/>
            <person name="Lundgren D.H."/>
            <person name="Hwang S.-I."/>
            <person name="Rezaul K."/>
            <person name="Wu L."/>
            <person name="Eng J.K."/>
            <person name="Rodionov V."/>
            <person name="Han D.K."/>
        </authorList>
    </citation>
    <scope>IDENTIFICATION BY MASS SPECTROMETRY [LARGE SCALE ANALYSIS]</scope>
    <source>
        <tissue>Leukemic T-cell</tissue>
    </source>
</reference>
<reference key="6">
    <citation type="journal article" date="2010" name="Cytoskeleton">
        <title>Tumoral and tissue-specific expression of the major human beta-tubulin isotypes.</title>
        <authorList>
            <person name="Leandro-Garcia L.J."/>
            <person name="Leskela S."/>
            <person name="Landa I."/>
            <person name="Montero-Conde C."/>
            <person name="Lopez-Jimenez E."/>
            <person name="Leton R."/>
            <person name="Cascon A."/>
            <person name="Robledo M."/>
            <person name="Rodriguez-Antona C."/>
        </authorList>
    </citation>
    <scope>TISSUE SPECIFICITY</scope>
</reference>
<reference key="7">
    <citation type="journal article" date="2011" name="BMC Syst. Biol.">
        <title>Initial characterization of the human central proteome.</title>
        <authorList>
            <person name="Burkard T.R."/>
            <person name="Planyavsky M."/>
            <person name="Kaupe I."/>
            <person name="Breitwieser F.P."/>
            <person name="Buerckstuemmer T."/>
            <person name="Bennett K.L."/>
            <person name="Superti-Furga G."/>
            <person name="Colinge J."/>
        </authorList>
    </citation>
    <scope>IDENTIFICATION BY MASS SPECTROMETRY [LARGE SCALE ANALYSIS]</scope>
</reference>
<reference key="8">
    <citation type="journal article" date="2011" name="Sci. Signal.">
        <title>System-wide temporal characterization of the proteome and phosphoproteome of human embryonic stem cell differentiation.</title>
        <authorList>
            <person name="Rigbolt K.T."/>
            <person name="Prokhorova T.A."/>
            <person name="Akimov V."/>
            <person name="Henningsen J."/>
            <person name="Johansen P.T."/>
            <person name="Kratchmarova I."/>
            <person name="Kassem M."/>
            <person name="Mann M."/>
            <person name="Olsen J.V."/>
            <person name="Blagoev B."/>
        </authorList>
    </citation>
    <scope>IDENTIFICATION BY MASS SPECTROMETRY [LARGE SCALE ANALYSIS]</scope>
</reference>
<reference key="9">
    <citation type="journal article" date="2013" name="J. Proteome Res.">
        <title>Toward a comprehensive characterization of a human cancer cell phosphoproteome.</title>
        <authorList>
            <person name="Zhou H."/>
            <person name="Di Palma S."/>
            <person name="Preisinger C."/>
            <person name="Peng M."/>
            <person name="Polat A.N."/>
            <person name="Heck A.J."/>
            <person name="Mohammed S."/>
        </authorList>
    </citation>
    <scope>IDENTIFICATION BY MASS SPECTROMETRY [LARGE SCALE ANALYSIS]</scope>
    <source>
        <tissue>Erythroleukemia</tissue>
    </source>
</reference>
<reference key="10">
    <citation type="journal article" date="2016" name="Cell">
        <title>Graded control of microtubule severing by tubulin glutamylation.</title>
        <authorList>
            <person name="Valenstein M.L."/>
            <person name="Roll-Mecak A."/>
        </authorList>
    </citation>
    <scope>GLUTAMYLATION</scope>
</reference>
<reference key="11">
    <citation type="journal article" date="2017" name="Hum. Mol. Genet.">
        <title>A TUBB6 mutation is associated with autosomal dominant non-progressive congenital facial palsy, bilateral ptosis and velopharyngeal dysfunction.</title>
        <authorList>
            <person name="Fazeli W."/>
            <person name="Herkenrath P."/>
            <person name="Stiller B."/>
            <person name="Neugebauer A."/>
            <person name="Fricke J."/>
            <person name="Lang-Roth R."/>
            <person name="Nuernberg G."/>
            <person name="Thoenes M."/>
            <person name="Becker J."/>
            <person name="Altmueller J."/>
            <person name="Volk A.E."/>
            <person name="Kubisch C."/>
            <person name="Heller R."/>
        </authorList>
    </citation>
    <scope>INVOLVEMENT IN FPVEPD</scope>
    <scope>VARIANT FPVEPD SER-394</scope>
    <scope>CHARACTERIZATION OF VARIANT FPVEPD SER-394</scope>
</reference>
<gene>
    <name type="primary">TUBB6</name>
</gene>
<sequence>MREIVHIQAGQCGNQIGTKFWEVISDEHGIDPAGGYVGDSALQLERINVYYNESSSQKYVPRAALVDLEPGTMDSVRSGPFGQLFRPDNFIFGQTGAGNNWAKGHYTEGAELVDAVLDVVRKECEHCDCLQGFQLTHSLGGGTGSGMGTLLISKIREEFPDRIMNTFSVMPSPKVSDTVVEPYNATLSVHQLVENTDETYCIDNEALYDICFRTLKLTTPTYGDLNHLVSATMSGVTTSLRFPGQLNADLRKLAVNMVPFPRLHFFMPGFAPLTSRGSQQYRALTVPELTQQMFDARNMMAACDPRHGRYLTVATVFRGPMSMKEVDEQMLAIQSKNSSYFVEWIPNNVKVAVCDIPPRGLKMASTFIGNSTAIQELFKRISEQFSAMFRRKAFLHWFTGEGMDEMEFTEAESNMNDLVSEYQQYQDATANDGEEAFEDEEEEIDG</sequence>
<proteinExistence type="evidence at protein level"/>